<reference key="1">
    <citation type="journal article" date="2006" name="Proc. Natl. Acad. Sci. U.S.A.">
        <title>Genome reduction in Leptospira borgpetersenii reflects limited transmission potential.</title>
        <authorList>
            <person name="Bulach D.M."/>
            <person name="Zuerner R.L."/>
            <person name="Wilson P."/>
            <person name="Seemann T."/>
            <person name="McGrath A."/>
            <person name="Cullen P.A."/>
            <person name="Davis J."/>
            <person name="Johnson M."/>
            <person name="Kuczek E."/>
            <person name="Alt D.P."/>
            <person name="Peterson-Burch B."/>
            <person name="Coppel R.L."/>
            <person name="Rood J.I."/>
            <person name="Davies J.K."/>
            <person name="Adler B."/>
        </authorList>
    </citation>
    <scope>NUCLEOTIDE SEQUENCE [LARGE SCALE GENOMIC DNA]</scope>
    <source>
        <strain>JB197</strain>
    </source>
</reference>
<evidence type="ECO:0000255" key="1">
    <source>
        <dbReference type="HAMAP-Rule" id="MF_00549"/>
    </source>
</evidence>
<dbReference type="EC" id="4.2.3.3" evidence="1"/>
<dbReference type="EMBL" id="CP000350">
    <property type="protein sequence ID" value="ABJ75513.1"/>
    <property type="molecule type" value="Genomic_DNA"/>
</dbReference>
<dbReference type="RefSeq" id="WP_002721507.1">
    <property type="nucleotide sequence ID" value="NC_008510.1"/>
</dbReference>
<dbReference type="SMR" id="Q04UA7"/>
<dbReference type="KEGG" id="lbj:LBJ_0865"/>
<dbReference type="HOGENOM" id="CLU_120420_0_1_12"/>
<dbReference type="Proteomes" id="UP000000656">
    <property type="component" value="Chromosome 1"/>
</dbReference>
<dbReference type="GO" id="GO:0005829">
    <property type="term" value="C:cytosol"/>
    <property type="evidence" value="ECO:0007669"/>
    <property type="project" value="TreeGrafter"/>
</dbReference>
<dbReference type="GO" id="GO:0008929">
    <property type="term" value="F:methylglyoxal synthase activity"/>
    <property type="evidence" value="ECO:0007669"/>
    <property type="project" value="UniProtKB-UniRule"/>
</dbReference>
<dbReference type="GO" id="GO:0019242">
    <property type="term" value="P:methylglyoxal biosynthetic process"/>
    <property type="evidence" value="ECO:0007669"/>
    <property type="project" value="UniProtKB-UniRule"/>
</dbReference>
<dbReference type="CDD" id="cd01422">
    <property type="entry name" value="MGS"/>
    <property type="match status" value="1"/>
</dbReference>
<dbReference type="FunFam" id="3.40.50.1380:FF:000006">
    <property type="entry name" value="Methylglyoxal synthase"/>
    <property type="match status" value="1"/>
</dbReference>
<dbReference type="Gene3D" id="3.40.50.1380">
    <property type="entry name" value="Methylglyoxal synthase-like domain"/>
    <property type="match status" value="1"/>
</dbReference>
<dbReference type="HAMAP" id="MF_00549">
    <property type="entry name" value="Methylglyoxal_synth"/>
    <property type="match status" value="1"/>
</dbReference>
<dbReference type="InterPro" id="IPR004363">
    <property type="entry name" value="Methylgl_synth"/>
</dbReference>
<dbReference type="InterPro" id="IPR018148">
    <property type="entry name" value="Methylglyoxal_synth_AS"/>
</dbReference>
<dbReference type="InterPro" id="IPR011607">
    <property type="entry name" value="MGS-like_dom"/>
</dbReference>
<dbReference type="InterPro" id="IPR036914">
    <property type="entry name" value="MGS-like_dom_sf"/>
</dbReference>
<dbReference type="NCBIfam" id="TIGR00160">
    <property type="entry name" value="MGSA"/>
    <property type="match status" value="1"/>
</dbReference>
<dbReference type="NCBIfam" id="NF003559">
    <property type="entry name" value="PRK05234.1"/>
    <property type="match status" value="1"/>
</dbReference>
<dbReference type="PANTHER" id="PTHR30492">
    <property type="entry name" value="METHYLGLYOXAL SYNTHASE"/>
    <property type="match status" value="1"/>
</dbReference>
<dbReference type="PANTHER" id="PTHR30492:SF0">
    <property type="entry name" value="METHYLGLYOXAL SYNTHASE"/>
    <property type="match status" value="1"/>
</dbReference>
<dbReference type="Pfam" id="PF02142">
    <property type="entry name" value="MGS"/>
    <property type="match status" value="1"/>
</dbReference>
<dbReference type="PIRSF" id="PIRSF006614">
    <property type="entry name" value="Methylglyox_syn"/>
    <property type="match status" value="1"/>
</dbReference>
<dbReference type="SMART" id="SM00851">
    <property type="entry name" value="MGS"/>
    <property type="match status" value="1"/>
</dbReference>
<dbReference type="SUPFAM" id="SSF52335">
    <property type="entry name" value="Methylglyoxal synthase-like"/>
    <property type="match status" value="1"/>
</dbReference>
<dbReference type="PROSITE" id="PS01335">
    <property type="entry name" value="METHYLGLYOXAL_SYNTH"/>
    <property type="match status" value="1"/>
</dbReference>
<dbReference type="PROSITE" id="PS51855">
    <property type="entry name" value="MGS"/>
    <property type="match status" value="1"/>
</dbReference>
<comment type="function">
    <text evidence="1">Catalyzes the formation of methylglyoxal from dihydroxyacetone phosphate.</text>
</comment>
<comment type="catalytic activity">
    <reaction evidence="1">
        <text>dihydroxyacetone phosphate = methylglyoxal + phosphate</text>
        <dbReference type="Rhea" id="RHEA:17937"/>
        <dbReference type="ChEBI" id="CHEBI:17158"/>
        <dbReference type="ChEBI" id="CHEBI:43474"/>
        <dbReference type="ChEBI" id="CHEBI:57642"/>
        <dbReference type="EC" id="4.2.3.3"/>
    </reaction>
</comment>
<comment type="similarity">
    <text evidence="1">Belongs to the methylglyoxal synthase family.</text>
</comment>
<protein>
    <recommendedName>
        <fullName evidence="1">Methylglyoxal synthase</fullName>
        <shortName evidence="1">MGS</shortName>
        <ecNumber evidence="1">4.2.3.3</ecNumber>
    </recommendedName>
</protein>
<proteinExistence type="inferred from homology"/>
<keyword id="KW-0456">Lyase</keyword>
<gene>
    <name evidence="1" type="primary">mgsA</name>
    <name type="ordered locus">LBJ_0865</name>
</gene>
<feature type="chain" id="PRO_1000017816" description="Methylglyoxal synthase">
    <location>
        <begin position="1"/>
        <end position="147"/>
    </location>
</feature>
<feature type="domain" description="MGS-like" evidence="1">
    <location>
        <begin position="4"/>
        <end position="147"/>
    </location>
</feature>
<feature type="active site" description="Proton donor/acceptor" evidence="1">
    <location>
        <position position="69"/>
    </location>
</feature>
<feature type="binding site" evidence="1">
    <location>
        <position position="17"/>
    </location>
    <ligand>
        <name>substrate</name>
    </ligand>
</feature>
<feature type="binding site" evidence="1">
    <location>
        <position position="21"/>
    </location>
    <ligand>
        <name>substrate</name>
    </ligand>
</feature>
<feature type="binding site" evidence="1">
    <location>
        <begin position="43"/>
        <end position="46"/>
    </location>
    <ligand>
        <name>substrate</name>
    </ligand>
</feature>
<feature type="binding site" evidence="1">
    <location>
        <begin position="63"/>
        <end position="64"/>
    </location>
    <ligand>
        <name>substrate</name>
    </ligand>
</feature>
<feature type="binding site" evidence="1">
    <location>
        <position position="96"/>
    </location>
    <ligand>
        <name>substrate</name>
    </ligand>
</feature>
<sequence length="147" mass="16310">MKEVSVPATKRIALVAHDNRKEDLVSWVKAHREILSKHRLFGTGTTGKLISEETGLPVTRFLSGPLGGDQQIGAKIAEGDLDIVVFFWDPLTAQPHDPDVKALLRIAVLYNVPMACNRSTADYMISSPQFTISYEKVLLNFELLCES</sequence>
<name>MGSA_LEPBJ</name>
<accession>Q04UA7</accession>
<organism>
    <name type="scientific">Leptospira borgpetersenii serovar Hardjo-bovis (strain JB197)</name>
    <dbReference type="NCBI Taxonomy" id="355277"/>
    <lineage>
        <taxon>Bacteria</taxon>
        <taxon>Pseudomonadati</taxon>
        <taxon>Spirochaetota</taxon>
        <taxon>Spirochaetia</taxon>
        <taxon>Leptospirales</taxon>
        <taxon>Leptospiraceae</taxon>
        <taxon>Leptospira</taxon>
    </lineage>
</organism>